<keyword id="KW-0238">DNA-binding</keyword>
<keyword id="KW-1185">Reference proteome</keyword>
<keyword id="KW-0804">Transcription</keyword>
<keyword id="KW-0805">Transcription regulation</keyword>
<gene>
    <name type="ordered locus">CPE0189</name>
</gene>
<accession>P26833</accession>
<name>Y189_CLOPE</name>
<dbReference type="EMBL" id="M81878">
    <property type="protein sequence ID" value="AAA23257.1"/>
    <property type="molecule type" value="Genomic_DNA"/>
</dbReference>
<dbReference type="EMBL" id="BA000016">
    <property type="protein sequence ID" value="BAB79895.1"/>
    <property type="molecule type" value="Genomic_DNA"/>
</dbReference>
<dbReference type="PIR" id="S43902">
    <property type="entry name" value="S43902"/>
</dbReference>
<dbReference type="RefSeq" id="WP_003457572.1">
    <property type="nucleotide sequence ID" value="NC_003366.1"/>
</dbReference>
<dbReference type="SMR" id="P26833"/>
<dbReference type="STRING" id="195102.gene:10489433"/>
<dbReference type="KEGG" id="cpe:CPE0189"/>
<dbReference type="HOGENOM" id="CLU_055769_0_0_9"/>
<dbReference type="Proteomes" id="UP000000818">
    <property type="component" value="Chromosome"/>
</dbReference>
<dbReference type="GO" id="GO:0097367">
    <property type="term" value="F:carbohydrate derivative binding"/>
    <property type="evidence" value="ECO:0007669"/>
    <property type="project" value="InterPro"/>
</dbReference>
<dbReference type="GO" id="GO:0003677">
    <property type="term" value="F:DNA binding"/>
    <property type="evidence" value="ECO:0007669"/>
    <property type="project" value="UniProtKB-KW"/>
</dbReference>
<dbReference type="GO" id="GO:0003700">
    <property type="term" value="F:DNA-binding transcription factor activity"/>
    <property type="evidence" value="ECO:0007669"/>
    <property type="project" value="InterPro"/>
</dbReference>
<dbReference type="GO" id="GO:1901135">
    <property type="term" value="P:carbohydrate derivative metabolic process"/>
    <property type="evidence" value="ECO:0007669"/>
    <property type="project" value="InterPro"/>
</dbReference>
<dbReference type="CDD" id="cd05013">
    <property type="entry name" value="SIS_RpiR"/>
    <property type="match status" value="1"/>
</dbReference>
<dbReference type="Gene3D" id="3.40.50.10490">
    <property type="entry name" value="Glucose-6-phosphate isomerase like protein, domain 1"/>
    <property type="match status" value="1"/>
</dbReference>
<dbReference type="Gene3D" id="1.10.10.10">
    <property type="entry name" value="Winged helix-like DNA-binding domain superfamily/Winged helix DNA-binding domain"/>
    <property type="match status" value="1"/>
</dbReference>
<dbReference type="InterPro" id="IPR009057">
    <property type="entry name" value="Homeodomain-like_sf"/>
</dbReference>
<dbReference type="InterPro" id="IPR000281">
    <property type="entry name" value="HTH_RpiR"/>
</dbReference>
<dbReference type="InterPro" id="IPR047640">
    <property type="entry name" value="RpiR-like"/>
</dbReference>
<dbReference type="InterPro" id="IPR035472">
    <property type="entry name" value="RpiR-like_SIS"/>
</dbReference>
<dbReference type="InterPro" id="IPR001347">
    <property type="entry name" value="SIS_dom"/>
</dbReference>
<dbReference type="InterPro" id="IPR046348">
    <property type="entry name" value="SIS_dom_sf"/>
</dbReference>
<dbReference type="InterPro" id="IPR036388">
    <property type="entry name" value="WH-like_DNA-bd_sf"/>
</dbReference>
<dbReference type="PANTHER" id="PTHR30514">
    <property type="entry name" value="GLUCOKINASE"/>
    <property type="match status" value="1"/>
</dbReference>
<dbReference type="PANTHER" id="PTHR30514:SF1">
    <property type="entry name" value="HTH-TYPE TRANSCRIPTIONAL REGULATOR HEXR-RELATED"/>
    <property type="match status" value="1"/>
</dbReference>
<dbReference type="Pfam" id="PF01418">
    <property type="entry name" value="HTH_6"/>
    <property type="match status" value="1"/>
</dbReference>
<dbReference type="Pfam" id="PF01380">
    <property type="entry name" value="SIS"/>
    <property type="match status" value="1"/>
</dbReference>
<dbReference type="SUPFAM" id="SSF46689">
    <property type="entry name" value="Homeodomain-like"/>
    <property type="match status" value="1"/>
</dbReference>
<dbReference type="SUPFAM" id="SSF53697">
    <property type="entry name" value="SIS domain"/>
    <property type="match status" value="1"/>
</dbReference>
<dbReference type="PROSITE" id="PS51071">
    <property type="entry name" value="HTH_RPIR"/>
    <property type="match status" value="1"/>
</dbReference>
<dbReference type="PROSITE" id="PS51464">
    <property type="entry name" value="SIS"/>
    <property type="match status" value="1"/>
</dbReference>
<sequence length="279" mass="31254">MGILEQLENPKFKATKSEKTLIEYIKSDLDNIIYKSISIIAKESGVGEATITRFTKKLGFNGFQDFKVTLAKEISNKKNTSIINLHVHRDESVTETANKMLKSSINILEQTVKQIDLDLMCKCRDLIMNAKRVYFIGIGYSGIAATDINYKFMRIGFTTVPVTDSHTMVIMSSITNDDDVIVAISNSGTTKEVIKTVKQAKENGTKIITLTEDSDNPLRKLSDYELTYTSAETIFETGSISSKIPQIFLLDLLYTEVIKEMFSEAVEKKIKTTSAILND</sequence>
<proteinExistence type="predicted"/>
<reference key="1">
    <citation type="journal article" date="1994" name="Mol. Gen. Genet.">
        <title>Molecular genetic analysis of the nagH gene encoding a hyaluronidase of Clostridium perfringens.</title>
        <authorList>
            <person name="Canard B."/>
            <person name="Garnier T."/>
            <person name="Saint-Joanis B."/>
            <person name="Cole S.T."/>
        </authorList>
    </citation>
    <scope>NUCLEOTIDE SEQUENCE [GENOMIC DNA]</scope>
    <source>
        <strain>CPN50</strain>
    </source>
</reference>
<reference key="2">
    <citation type="journal article" date="2002" name="Proc. Natl. Acad. Sci. U.S.A.">
        <title>Complete genome sequence of Clostridium perfringens, an anaerobic flesh-eater.</title>
        <authorList>
            <person name="Shimizu T."/>
            <person name="Ohtani K."/>
            <person name="Hirakawa H."/>
            <person name="Ohshima K."/>
            <person name="Yamashita A."/>
            <person name="Shiba T."/>
            <person name="Ogasawara N."/>
            <person name="Hattori M."/>
            <person name="Kuhara S."/>
            <person name="Hayashi H."/>
        </authorList>
    </citation>
    <scope>NUCLEOTIDE SEQUENCE [LARGE SCALE GENOMIC DNA]</scope>
    <source>
        <strain>13 / Type A</strain>
    </source>
</reference>
<evidence type="ECO:0000255" key="1">
    <source>
        <dbReference type="PROSITE-ProRule" id="PRU00390"/>
    </source>
</evidence>
<evidence type="ECO:0000255" key="2">
    <source>
        <dbReference type="PROSITE-ProRule" id="PRU00797"/>
    </source>
</evidence>
<protein>
    <recommendedName>
        <fullName>Uncharacterized HTH-type transcriptional regulator CPE0189</fullName>
    </recommendedName>
</protein>
<feature type="chain" id="PRO_0000068631" description="Uncharacterized HTH-type transcriptional regulator CPE0189">
    <location>
        <begin position="1"/>
        <end position="279"/>
    </location>
</feature>
<feature type="domain" description="HTH rpiR-type" evidence="1">
    <location>
        <begin position="1"/>
        <end position="77"/>
    </location>
</feature>
<feature type="domain" description="SIS" evidence="2">
    <location>
        <begin position="123"/>
        <end position="263"/>
    </location>
</feature>
<feature type="DNA-binding region" description="H-T-H motif" evidence="1">
    <location>
        <begin position="37"/>
        <end position="56"/>
    </location>
</feature>
<organism>
    <name type="scientific">Clostridium perfringens (strain 13 / Type A)</name>
    <dbReference type="NCBI Taxonomy" id="195102"/>
    <lineage>
        <taxon>Bacteria</taxon>
        <taxon>Bacillati</taxon>
        <taxon>Bacillota</taxon>
        <taxon>Clostridia</taxon>
        <taxon>Eubacteriales</taxon>
        <taxon>Clostridiaceae</taxon>
        <taxon>Clostridium</taxon>
    </lineage>
</organism>